<name>PRIL_METBU</name>
<feature type="chain" id="PRO_1000045513" description="DNA primase large subunit PriL">
    <location>
        <begin position="1"/>
        <end position="364"/>
    </location>
</feature>
<feature type="region of interest" description="Disordered" evidence="2">
    <location>
        <begin position="345"/>
        <end position="364"/>
    </location>
</feature>
<feature type="binding site" evidence="1">
    <location>
        <position position="237"/>
    </location>
    <ligand>
        <name>[4Fe-4S] cluster</name>
        <dbReference type="ChEBI" id="CHEBI:49883"/>
    </ligand>
</feature>
<feature type="binding site" evidence="1">
    <location>
        <position position="309"/>
    </location>
    <ligand>
        <name>[4Fe-4S] cluster</name>
        <dbReference type="ChEBI" id="CHEBI:49883"/>
    </ligand>
</feature>
<feature type="binding site" evidence="1">
    <location>
        <position position="318"/>
    </location>
    <ligand>
        <name>[4Fe-4S] cluster</name>
        <dbReference type="ChEBI" id="CHEBI:49883"/>
    </ligand>
</feature>
<feature type="binding site" evidence="1">
    <location>
        <position position="325"/>
    </location>
    <ligand>
        <name>[4Fe-4S] cluster</name>
        <dbReference type="ChEBI" id="CHEBI:49883"/>
    </ligand>
</feature>
<keyword id="KW-0004">4Fe-4S</keyword>
<keyword id="KW-0235">DNA replication</keyword>
<keyword id="KW-0408">Iron</keyword>
<keyword id="KW-0411">Iron-sulfur</keyword>
<keyword id="KW-0479">Metal-binding</keyword>
<keyword id="KW-0639">Primosome</keyword>
<accession>Q12U19</accession>
<gene>
    <name evidence="1" type="primary">priL</name>
    <name type="synonym">priB</name>
    <name type="ordered locus">Mbur_2192</name>
</gene>
<protein>
    <recommendedName>
        <fullName evidence="1">DNA primase large subunit PriL</fullName>
    </recommendedName>
</protein>
<reference key="1">
    <citation type="journal article" date="2009" name="ISME J.">
        <title>The genome sequence of the psychrophilic archaeon, Methanococcoides burtonii: the role of genome evolution in cold adaptation.</title>
        <authorList>
            <person name="Allen M.A."/>
            <person name="Lauro F.M."/>
            <person name="Williams T.J."/>
            <person name="Burg D."/>
            <person name="Siddiqui K.S."/>
            <person name="De Francisci D."/>
            <person name="Chong K.W."/>
            <person name="Pilak O."/>
            <person name="Chew H.H."/>
            <person name="De Maere M.Z."/>
            <person name="Ting L."/>
            <person name="Katrib M."/>
            <person name="Ng C."/>
            <person name="Sowers K.R."/>
            <person name="Galperin M.Y."/>
            <person name="Anderson I.J."/>
            <person name="Ivanova N."/>
            <person name="Dalin E."/>
            <person name="Martinez M."/>
            <person name="Lapidus A."/>
            <person name="Hauser L."/>
            <person name="Land M."/>
            <person name="Thomas T."/>
            <person name="Cavicchioli R."/>
        </authorList>
    </citation>
    <scope>NUCLEOTIDE SEQUENCE [LARGE SCALE GENOMIC DNA]</scope>
    <source>
        <strain>DSM 6242 / NBRC 107633 / OCM 468 / ACE-M</strain>
    </source>
</reference>
<evidence type="ECO:0000255" key="1">
    <source>
        <dbReference type="HAMAP-Rule" id="MF_00701"/>
    </source>
</evidence>
<evidence type="ECO:0000256" key="2">
    <source>
        <dbReference type="SAM" id="MobiDB-lite"/>
    </source>
</evidence>
<dbReference type="EMBL" id="CP000300">
    <property type="protein sequence ID" value="ABE53057.1"/>
    <property type="molecule type" value="Genomic_DNA"/>
</dbReference>
<dbReference type="RefSeq" id="WP_011500193.1">
    <property type="nucleotide sequence ID" value="NC_007955.1"/>
</dbReference>
<dbReference type="SMR" id="Q12U19"/>
<dbReference type="STRING" id="259564.Mbur_2192"/>
<dbReference type="GeneID" id="3997048"/>
<dbReference type="KEGG" id="mbu:Mbur_2192"/>
<dbReference type="HOGENOM" id="CLU_052778_0_0_2"/>
<dbReference type="OrthoDB" id="46081at2157"/>
<dbReference type="Proteomes" id="UP000001979">
    <property type="component" value="Chromosome"/>
</dbReference>
<dbReference type="GO" id="GO:1990077">
    <property type="term" value="C:primosome complex"/>
    <property type="evidence" value="ECO:0007669"/>
    <property type="project" value="UniProtKB-KW"/>
</dbReference>
<dbReference type="GO" id="GO:0051539">
    <property type="term" value="F:4 iron, 4 sulfur cluster binding"/>
    <property type="evidence" value="ECO:0007669"/>
    <property type="project" value="UniProtKB-UniRule"/>
</dbReference>
<dbReference type="GO" id="GO:0003899">
    <property type="term" value="F:DNA-directed RNA polymerase activity"/>
    <property type="evidence" value="ECO:0007669"/>
    <property type="project" value="InterPro"/>
</dbReference>
<dbReference type="GO" id="GO:0046872">
    <property type="term" value="F:metal ion binding"/>
    <property type="evidence" value="ECO:0007669"/>
    <property type="project" value="UniProtKB-KW"/>
</dbReference>
<dbReference type="GO" id="GO:0006270">
    <property type="term" value="P:DNA replication initiation"/>
    <property type="evidence" value="ECO:0007669"/>
    <property type="project" value="TreeGrafter"/>
</dbReference>
<dbReference type="GO" id="GO:0006269">
    <property type="term" value="P:DNA replication, synthesis of primer"/>
    <property type="evidence" value="ECO:0007669"/>
    <property type="project" value="UniProtKB-UniRule"/>
</dbReference>
<dbReference type="CDD" id="cd06560">
    <property type="entry name" value="PriL"/>
    <property type="match status" value="1"/>
</dbReference>
<dbReference type="HAMAP" id="MF_00701">
    <property type="entry name" value="DNA_primase_lrg_arc"/>
    <property type="match status" value="1"/>
</dbReference>
<dbReference type="InterPro" id="IPR007238">
    <property type="entry name" value="DNA_primase_lsu_euk/arc"/>
</dbReference>
<dbReference type="InterPro" id="IPR023642">
    <property type="entry name" value="DNA_primase_lsu_PriL"/>
</dbReference>
<dbReference type="NCBIfam" id="NF002588">
    <property type="entry name" value="PRK02249.1-2"/>
    <property type="match status" value="1"/>
</dbReference>
<dbReference type="PANTHER" id="PTHR10537">
    <property type="entry name" value="DNA PRIMASE LARGE SUBUNIT"/>
    <property type="match status" value="1"/>
</dbReference>
<dbReference type="PANTHER" id="PTHR10537:SF3">
    <property type="entry name" value="DNA PRIMASE LARGE SUBUNIT"/>
    <property type="match status" value="1"/>
</dbReference>
<dbReference type="Pfam" id="PF04104">
    <property type="entry name" value="DNA_primase_lrg"/>
    <property type="match status" value="1"/>
</dbReference>
<dbReference type="SUPFAM" id="SSF140914">
    <property type="entry name" value="PriB N-terminal domain-like"/>
    <property type="match status" value="1"/>
</dbReference>
<proteinExistence type="inferred from homology"/>
<comment type="function">
    <text evidence="1">Regulatory subunit of DNA primase, an RNA polymerase that catalyzes the synthesis of short RNA molecules used as primers for DNA polymerase during DNA replication. Stabilizes and modulates the activity of the small subunit, increasing the rate of DNA synthesis, and conferring RNA synthesis capability. The DNA polymerase activity may enable DNA primase to also catalyze primer extension after primer synthesis. May also play a role in DNA repair.</text>
</comment>
<comment type="cofactor">
    <cofactor evidence="1">
        <name>[4Fe-4S] cluster</name>
        <dbReference type="ChEBI" id="CHEBI:49883"/>
    </cofactor>
    <text evidence="1">Binds 1 [4Fe-4S] cluster.</text>
</comment>
<comment type="subunit">
    <text evidence="1">Heterodimer of a small subunit (PriS) and a large subunit (PriL).</text>
</comment>
<comment type="similarity">
    <text evidence="1">Belongs to the eukaryotic-type primase large subunit family.</text>
</comment>
<sequence length="364" mass="41420">MDNRHLALYPFVTEASEYVGSLGFSPDKLLSSRALESARIRGRERVIQALEGEIEKPSPSSSEEGKILTELLSYPFSRILVSCIDDPFLTRKYALAEAKAAYHLLKTQQPEFLQDLATDFRINAEIYENPETHDIFFDLHFTDYIKLASPLKDLNWKLVNRKMKKGYVKISKEELARLLQEAIRLRIQNSLPVTVPKEICEACIPHTDTISEELEKKKTEFGVGEFQRVESDLFPPCITQAIANVRAGVNLAHSMRFAMTSFLINIGMSVDEVVAMFNISPDFDEEKTRYQIEHIAGTSSGTTYKPPSCNTMRTYGNCSAPDELCKGVKHPLGYYSRRVWVKNRMQNDNEKGHEEKKEGETPPQ</sequence>
<organism>
    <name type="scientific">Methanococcoides burtonii (strain DSM 6242 / NBRC 107633 / OCM 468 / ACE-M)</name>
    <dbReference type="NCBI Taxonomy" id="259564"/>
    <lineage>
        <taxon>Archaea</taxon>
        <taxon>Methanobacteriati</taxon>
        <taxon>Methanobacteriota</taxon>
        <taxon>Stenosarchaea group</taxon>
        <taxon>Methanomicrobia</taxon>
        <taxon>Methanosarcinales</taxon>
        <taxon>Methanosarcinaceae</taxon>
        <taxon>Methanococcoides</taxon>
    </lineage>
</organism>